<dbReference type="EC" id="3.6.1.73" evidence="1 2"/>
<dbReference type="EMBL" id="U14003">
    <property type="protein sequence ID" value="AAA97290.1"/>
    <property type="status" value="ALT_INIT"/>
    <property type="molecule type" value="Genomic_DNA"/>
</dbReference>
<dbReference type="EMBL" id="U00096">
    <property type="protein sequence ID" value="AAC77347.2"/>
    <property type="molecule type" value="Genomic_DNA"/>
</dbReference>
<dbReference type="EMBL" id="AP009048">
    <property type="protein sequence ID" value="BAE78383.1"/>
    <property type="molecule type" value="Genomic_DNA"/>
</dbReference>
<dbReference type="EMBL" id="J01715">
    <property type="status" value="NOT_ANNOTATED_CDS"/>
    <property type="molecule type" value="Genomic_DNA"/>
</dbReference>
<dbReference type="EMBL" id="L13768">
    <property type="protein sequence ID" value="AAA72135.1"/>
    <property type="molecule type" value="Genomic_DNA"/>
</dbReference>
<dbReference type="PIR" id="S56618">
    <property type="entry name" value="S56618"/>
</dbReference>
<dbReference type="RefSeq" id="NP_418811.2">
    <property type="nucleotide sequence ID" value="NC_000913.3"/>
</dbReference>
<dbReference type="RefSeq" id="WP_001338221.1">
    <property type="nucleotide sequence ID" value="NZ_LN832404.1"/>
</dbReference>
<dbReference type="PDB" id="1U5W">
    <property type="method" value="X-ray"/>
    <property type="resolution" value="2.30 A"/>
    <property type="chains" value="A/B/C/D/E/F/G/H=1-170"/>
</dbReference>
<dbReference type="PDBsum" id="1U5W"/>
<dbReference type="SMR" id="P39411"/>
<dbReference type="BioGRID" id="4262781">
    <property type="interactions" value="9"/>
</dbReference>
<dbReference type="DIP" id="DIP-12663N"/>
<dbReference type="FunCoup" id="P39411">
    <property type="interactions" value="125"/>
</dbReference>
<dbReference type="STRING" id="511145.b4394"/>
<dbReference type="jPOST" id="P39411"/>
<dbReference type="PaxDb" id="511145-b4394"/>
<dbReference type="EnsemblBacteria" id="AAC77347">
    <property type="protein sequence ID" value="AAC77347"/>
    <property type="gene ID" value="b4394"/>
</dbReference>
<dbReference type="GeneID" id="75169890"/>
<dbReference type="GeneID" id="948919"/>
<dbReference type="KEGG" id="ecj:JW5801"/>
<dbReference type="KEGG" id="eco:b4394"/>
<dbReference type="KEGG" id="ecoc:C3026_23745"/>
<dbReference type="PATRIC" id="fig|1411691.4.peg.2290"/>
<dbReference type="EchoBASE" id="EB2485"/>
<dbReference type="eggNOG" id="COG1986">
    <property type="taxonomic scope" value="Bacteria"/>
</dbReference>
<dbReference type="HOGENOM" id="CLU_087417_1_0_6"/>
<dbReference type="InParanoid" id="P39411"/>
<dbReference type="OMA" id="ADYWVGI"/>
<dbReference type="OrthoDB" id="6334099at2"/>
<dbReference type="PhylomeDB" id="P39411"/>
<dbReference type="BioCyc" id="EcoCyc:EG12600-MONOMER"/>
<dbReference type="BioCyc" id="MetaCyc:EG12600-MONOMER"/>
<dbReference type="BRENDA" id="3.6.1.73">
    <property type="organism ID" value="2026"/>
</dbReference>
<dbReference type="EvolutionaryTrace" id="P39411"/>
<dbReference type="PRO" id="PR:P39411"/>
<dbReference type="Proteomes" id="UP000000625">
    <property type="component" value="Chromosome"/>
</dbReference>
<dbReference type="GO" id="GO:0103023">
    <property type="term" value="F:ITPase activity"/>
    <property type="evidence" value="ECO:0007669"/>
    <property type="project" value="UniProtKB-EC"/>
</dbReference>
<dbReference type="GO" id="GO:0000287">
    <property type="term" value="F:magnesium ion binding"/>
    <property type="evidence" value="ECO:0000314"/>
    <property type="project" value="EcoCyc"/>
</dbReference>
<dbReference type="GO" id="GO:0000166">
    <property type="term" value="F:nucleotide binding"/>
    <property type="evidence" value="ECO:0007669"/>
    <property type="project" value="UniProtKB-KW"/>
</dbReference>
<dbReference type="GO" id="GO:0042803">
    <property type="term" value="F:protein homodimerization activity"/>
    <property type="evidence" value="ECO:0000314"/>
    <property type="project" value="EcoCyc"/>
</dbReference>
<dbReference type="GO" id="GO:0017111">
    <property type="term" value="F:ribonucleoside triphosphate phosphatase activity"/>
    <property type="evidence" value="ECO:0000314"/>
    <property type="project" value="EcoCyc"/>
</dbReference>
<dbReference type="GO" id="GO:0009117">
    <property type="term" value="P:nucleotide metabolic process"/>
    <property type="evidence" value="ECO:0007669"/>
    <property type="project" value="UniProtKB-KW"/>
</dbReference>
<dbReference type="GO" id="GO:0046677">
    <property type="term" value="P:response to antibiotic"/>
    <property type="evidence" value="ECO:0007669"/>
    <property type="project" value="UniProtKB-KW"/>
</dbReference>
<dbReference type="GO" id="GO:0006772">
    <property type="term" value="P:thiamine metabolic process"/>
    <property type="evidence" value="ECO:0000269"/>
    <property type="project" value="EcoliWiki"/>
</dbReference>
<dbReference type="FunFam" id="3.90.950.10:FF:000002">
    <property type="entry name" value="Inosine/xanthosine triphosphatase"/>
    <property type="match status" value="1"/>
</dbReference>
<dbReference type="Gene3D" id="3.90.950.10">
    <property type="match status" value="1"/>
</dbReference>
<dbReference type="HAMAP" id="MF_00648">
    <property type="entry name" value="Non_canon_purine_NTPase_YjjX"/>
    <property type="match status" value="1"/>
</dbReference>
<dbReference type="InterPro" id="IPR029001">
    <property type="entry name" value="ITPase-like_fam"/>
</dbReference>
<dbReference type="InterPro" id="IPR002786">
    <property type="entry name" value="Non_canon_purine_NTPase"/>
</dbReference>
<dbReference type="InterPro" id="IPR026533">
    <property type="entry name" value="NTPase/PRRC1"/>
</dbReference>
<dbReference type="InterPro" id="IPR050299">
    <property type="entry name" value="YjjX_NTPase"/>
</dbReference>
<dbReference type="NCBIfam" id="TIGR00258">
    <property type="entry name" value="inosine/xanthosine triphosphatase"/>
    <property type="match status" value="1"/>
</dbReference>
<dbReference type="NCBIfam" id="NF003459">
    <property type="entry name" value="PRK05074.1"/>
    <property type="match status" value="1"/>
</dbReference>
<dbReference type="PANTHER" id="PTHR34699">
    <property type="match status" value="1"/>
</dbReference>
<dbReference type="PANTHER" id="PTHR34699:SF2">
    <property type="entry name" value="NON-CANONICAL PURINE NTP PHOSPHATASE_PRRC1 DOMAIN-CONTAINING PROTEIN"/>
    <property type="match status" value="1"/>
</dbReference>
<dbReference type="Pfam" id="PF01931">
    <property type="entry name" value="NTPase_I-T"/>
    <property type="match status" value="1"/>
</dbReference>
<dbReference type="SUPFAM" id="SSF52972">
    <property type="entry name" value="ITPase-like"/>
    <property type="match status" value="1"/>
</dbReference>
<organism>
    <name type="scientific">Escherichia coli (strain K12)</name>
    <dbReference type="NCBI Taxonomy" id="83333"/>
    <lineage>
        <taxon>Bacteria</taxon>
        <taxon>Pseudomonadati</taxon>
        <taxon>Pseudomonadota</taxon>
        <taxon>Gammaproteobacteria</taxon>
        <taxon>Enterobacterales</taxon>
        <taxon>Enterobacteriaceae</taxon>
        <taxon>Escherichia</taxon>
    </lineage>
</organism>
<name>NCPP_ECOLI</name>
<sequence>MHQVVCATTNPAKIQAILQAFHEIFGEGSCHIASVAVESGVPEQPFGSEETRAGARNRVANARRLLPEADFWVAIEAGIDGDSTFSWVVIENASQRGEARSATLPLPAVILEKVREGEALGPVMSRYTGIDEIGRKEGAIGVFTAGKLTRASVYHQAVILALSPFHNAVY</sequence>
<evidence type="ECO:0000255" key="1">
    <source>
        <dbReference type="HAMAP-Rule" id="MF_00648"/>
    </source>
</evidence>
<evidence type="ECO:0000269" key="2">
    <source>
    </source>
</evidence>
<evidence type="ECO:0000303" key="3">
    <source>
    </source>
</evidence>
<evidence type="ECO:0000305" key="4"/>
<evidence type="ECO:0000305" key="5">
    <source>
    </source>
</evidence>
<evidence type="ECO:0007744" key="6">
    <source>
        <dbReference type="PDB" id="1U5W"/>
    </source>
</evidence>
<evidence type="ECO:0007829" key="7">
    <source>
        <dbReference type="PDB" id="1U5W"/>
    </source>
</evidence>
<proteinExistence type="evidence at protein level"/>
<accession>P39411</accession>
<accession>Q2M5S3</accession>
<reference key="1">
    <citation type="journal article" date="1995" name="Nucleic Acids Res.">
        <title>Analysis of the Escherichia coli genome VI: DNA sequence of the region from 92.8 through 100 minutes.</title>
        <authorList>
            <person name="Burland V.D."/>
            <person name="Plunkett G. III"/>
            <person name="Sofia H.J."/>
            <person name="Daniels D.L."/>
            <person name="Blattner F.R."/>
        </authorList>
    </citation>
    <scope>NUCLEOTIDE SEQUENCE [LARGE SCALE GENOMIC DNA]</scope>
    <source>
        <strain>K12 / MG1655 / ATCC 47076</strain>
    </source>
</reference>
<reference key="2">
    <citation type="journal article" date="1997" name="Science">
        <title>The complete genome sequence of Escherichia coli K-12.</title>
        <authorList>
            <person name="Blattner F.R."/>
            <person name="Plunkett G. III"/>
            <person name="Bloch C.A."/>
            <person name="Perna N.T."/>
            <person name="Burland V."/>
            <person name="Riley M."/>
            <person name="Collado-Vides J."/>
            <person name="Glasner J.D."/>
            <person name="Rode C.K."/>
            <person name="Mayhew G.F."/>
            <person name="Gregor J."/>
            <person name="Davis N.W."/>
            <person name="Kirkpatrick H.A."/>
            <person name="Goeden M.A."/>
            <person name="Rose D.J."/>
            <person name="Mau B."/>
            <person name="Shao Y."/>
        </authorList>
    </citation>
    <scope>NUCLEOTIDE SEQUENCE [LARGE SCALE GENOMIC DNA]</scope>
    <source>
        <strain>K12 / MG1655 / ATCC 47076</strain>
    </source>
</reference>
<reference key="3">
    <citation type="journal article" date="2006" name="Mol. Syst. Biol.">
        <title>Highly accurate genome sequences of Escherichia coli K-12 strains MG1655 and W3110.</title>
        <authorList>
            <person name="Hayashi K."/>
            <person name="Morooka N."/>
            <person name="Yamamoto Y."/>
            <person name="Fujita K."/>
            <person name="Isono K."/>
            <person name="Choi S."/>
            <person name="Ohtsubo E."/>
            <person name="Baba T."/>
            <person name="Wanner B.L."/>
            <person name="Mori H."/>
            <person name="Horiuchi T."/>
        </authorList>
    </citation>
    <scope>NUCLEOTIDE SEQUENCE [LARGE SCALE GENOMIC DNA]</scope>
    <source>
        <strain>K12 / W3110 / ATCC 27325 / DSM 5911</strain>
    </source>
</reference>
<reference key="4">
    <citation type="journal article" date="1980" name="Nucleic Acids Res.">
        <title>DNA sequence of the E. coli trpR gene and prediction of the amino acid sequence of Trp repressor.</title>
        <authorList>
            <person name="Singleton C.K."/>
            <person name="Roeder W.D."/>
            <person name="Bogosian G."/>
            <person name="Somerville R.L."/>
            <person name="Weith H.L."/>
        </authorList>
    </citation>
    <scope>NUCLEOTIDE SEQUENCE [GENOMIC DNA] OF 28-170</scope>
</reference>
<reference key="5">
    <citation type="journal article" date="1994" name="DNA Seq.">
        <title>Nucleotide sequence of the Salmonella typhimurium trpR gene.</title>
        <authorList>
            <person name="Skrypka I."/>
            <person name="Somerville R.L."/>
        </authorList>
    </citation>
    <scope>NUCLEOTIDE SEQUENCE [GENOMIC DNA] OF 137-170</scope>
</reference>
<reference key="6">
    <citation type="journal article" date="2004" name="J. Biol. Chem.">
        <title>A genetic screen for the identification of thiamin metabolic genes.</title>
        <authorList>
            <person name="Lawhorn B.G."/>
            <person name="Gerdes S.Y."/>
            <person name="Begley T.P."/>
        </authorList>
    </citation>
    <scope>ANTIBIOTIC RESISTANCE</scope>
</reference>
<reference evidence="6" key="7">
    <citation type="journal article" date="2005" name="Structure">
        <title>Identification of an ITPase/XTPase in Escherichia coli by structural and biochemical analysis.</title>
        <authorList>
            <person name="Zheng J."/>
            <person name="Singh V.K."/>
            <person name="Jia Z."/>
        </authorList>
    </citation>
    <scope>X-RAY CRYSTALLOGRAPHY (2.3 ANGSTROMS)</scope>
    <scope>FUNCTION</scope>
    <scope>CATALYTIC ACTIVITY</scope>
    <scope>BIOPHYSICOCHEMICAL PROPERTIES</scope>
    <scope>COFACTOR</scope>
    <scope>SUBSTRATE SPECIFICITY</scope>
    <scope>ACTIVITY REGULATION</scope>
    <scope>SUBUNIT</scope>
</reference>
<protein>
    <recommendedName>
        <fullName evidence="1 3">Inosine/xanthosine triphosphatase</fullName>
        <shortName evidence="1 3">ITPase/XTPase</shortName>
        <ecNumber evidence="1 2">3.6.1.73</ecNumber>
    </recommendedName>
    <alternativeName>
        <fullName>Non-canonical purine NTP phosphatase</fullName>
    </alternativeName>
    <alternativeName>
        <fullName>Non-standard purine NTP phosphatase</fullName>
    </alternativeName>
    <alternativeName>
        <fullName>Nucleoside-triphosphate phosphatase</fullName>
        <shortName>NTPase</shortName>
    </alternativeName>
</protein>
<feature type="chain" id="PRO_0000156337" description="Inosine/xanthosine triphosphatase">
    <location>
        <begin position="1"/>
        <end position="170"/>
    </location>
</feature>
<feature type="binding site" evidence="1">
    <location>
        <begin position="8"/>
        <end position="13"/>
    </location>
    <ligand>
        <name>substrate</name>
    </ligand>
</feature>
<feature type="binding site" evidence="1">
    <location>
        <position position="38"/>
    </location>
    <ligand>
        <name>Mg(2+)</name>
        <dbReference type="ChEBI" id="CHEBI:18420"/>
    </ligand>
</feature>
<feature type="binding site" evidence="1">
    <location>
        <begin position="68"/>
        <end position="69"/>
    </location>
    <ligand>
        <name>substrate</name>
    </ligand>
</feature>
<feature type="binding site" evidence="1">
    <location>
        <position position="68"/>
    </location>
    <ligand>
        <name>Mg(2+)</name>
        <dbReference type="ChEBI" id="CHEBI:18420"/>
    </ligand>
</feature>
<feature type="sequence conflict" description="In Ref. 5; AAA72135." evidence="4" ref="5">
    <original>GKLTRAS</original>
    <variation>ETHSRH</variation>
    <location>
        <begin position="146"/>
        <end position="152"/>
    </location>
</feature>
<feature type="strand" evidence="7">
    <location>
        <begin position="2"/>
        <end position="7"/>
    </location>
</feature>
<feature type="helix" evidence="7">
    <location>
        <begin position="11"/>
        <end position="25"/>
    </location>
</feature>
<feature type="strand" evidence="7">
    <location>
        <begin position="30"/>
        <end position="34"/>
    </location>
</feature>
<feature type="helix" evidence="7">
    <location>
        <begin position="48"/>
        <end position="65"/>
    </location>
</feature>
<feature type="strand" evidence="7">
    <location>
        <begin position="69"/>
        <end position="79"/>
    </location>
</feature>
<feature type="strand" evidence="7">
    <location>
        <begin position="81"/>
        <end position="94"/>
    </location>
</feature>
<feature type="strand" evidence="7">
    <location>
        <begin position="96"/>
        <end position="100"/>
    </location>
</feature>
<feature type="helix" evidence="7">
    <location>
        <begin position="108"/>
        <end position="114"/>
    </location>
</feature>
<feature type="turn" evidence="7">
    <location>
        <begin position="115"/>
        <end position="117"/>
    </location>
</feature>
<feature type="helix" evidence="7">
    <location>
        <begin position="120"/>
        <end position="125"/>
    </location>
</feature>
<feature type="helix" evidence="7">
    <location>
        <begin position="133"/>
        <end position="135"/>
    </location>
</feature>
<feature type="helix" evidence="7">
    <location>
        <begin position="138"/>
        <end position="143"/>
    </location>
</feature>
<feature type="turn" evidence="7">
    <location>
        <begin position="144"/>
        <end position="146"/>
    </location>
</feature>
<feature type="helix" evidence="7">
    <location>
        <begin position="150"/>
        <end position="161"/>
    </location>
</feature>
<feature type="helix" evidence="7">
    <location>
        <begin position="163"/>
        <end position="166"/>
    </location>
</feature>
<feature type="helix" evidence="7">
    <location>
        <begin position="168"/>
        <end position="170"/>
    </location>
</feature>
<comment type="function">
    <text evidence="2 5">Phosphatase that hydrolyzes non-canonical purine nucleotides such as XTP and ITP to their respective diphosphate derivatives. Probably excludes non-canonical purines from DNA/RNA precursor pool, thus preventing their incorporation into DNA/RNA and avoiding chromosomal lesions. ITP and XTP are the best substrates, followed by GDP and dITP. Is not active on dATP and dGTP, and exhibits no phosphatase activity toward pyrimidines (CTP, TTP, UTP, dCTP, and dTTP) (PubMed:16216582). Also seems to be implicated in the resistance against the thiamine metabolism inhibitors bacimethrin and CF3-HMP (PubMed:15292217).</text>
</comment>
<comment type="catalytic activity">
    <reaction evidence="1 2">
        <text>XTP + H2O = XDP + phosphate + H(+)</text>
        <dbReference type="Rhea" id="RHEA:28406"/>
        <dbReference type="ChEBI" id="CHEBI:15377"/>
        <dbReference type="ChEBI" id="CHEBI:15378"/>
        <dbReference type="ChEBI" id="CHEBI:43474"/>
        <dbReference type="ChEBI" id="CHEBI:59884"/>
        <dbReference type="ChEBI" id="CHEBI:61314"/>
        <dbReference type="EC" id="3.6.1.73"/>
    </reaction>
</comment>
<comment type="catalytic activity">
    <reaction evidence="1 2">
        <text>ITP + H2O = IDP + phosphate + H(+)</text>
        <dbReference type="Rhea" id="RHEA:28330"/>
        <dbReference type="ChEBI" id="CHEBI:15377"/>
        <dbReference type="ChEBI" id="CHEBI:15378"/>
        <dbReference type="ChEBI" id="CHEBI:43474"/>
        <dbReference type="ChEBI" id="CHEBI:58280"/>
        <dbReference type="ChEBI" id="CHEBI:61402"/>
        <dbReference type="EC" id="3.6.1.73"/>
    </reaction>
</comment>
<comment type="cofactor">
    <cofactor evidence="2">
        <name>Mg(2+)</name>
        <dbReference type="ChEBI" id="CHEBI:18420"/>
    </cofactor>
    <cofactor evidence="2">
        <name>Mn(2+)</name>
        <dbReference type="ChEBI" id="CHEBI:29035"/>
    </cofactor>
    <text evidence="2">Binds 1 divalent cation per subunit. Activity is maximal in the presence of Mg(2+), while Mn(2+) decreases the activity by 20%.</text>
</comment>
<comment type="activity regulation">
    <text evidence="2">Competitively inhibited by ATP, GTP and TTP.</text>
</comment>
<comment type="biophysicochemical properties">
    <kinetics>
        <KM evidence="2">0.5 mM for ITP</KM>
        <KM evidence="2">1.17 mM for XTP</KM>
        <KM evidence="2">0.58 mM for GDP</KM>
        <KM evidence="2">4.51 mM for dITP</KM>
        <KM evidence="2">1.24 mM for GTP</KM>
        <KM evidence="2">0.91 mM for magnesium ions</KM>
        <KM evidence="2">1.39 mM for manganese ions</KM>
        <KM evidence="2">2.44 mM for zinc ions</KM>
        <Vmax evidence="2">1720.0 umol/min/mg enzyme with ITP as substrate</Vmax>
        <Vmax evidence="2">7876.0 umol/min/mg enzyme with XTP as substrate</Vmax>
        <Vmax evidence="2">358.0 umol/min/mg enzyme with GDP as substrate</Vmax>
        <Vmax evidence="2">1849.0 umol/min/mg enzyme with dITP as substrate</Vmax>
        <Vmax evidence="2">67.0 umol/min/mg enzyme with GTP as substrate</Vmax>
        <Vmax evidence="2">1264.0 umol/min/mg enzyme with ITP as substrate and magnesium ions as cofactor (at 25 degrees Celsius and pH 6.75)</Vmax>
        <Vmax evidence="2">571.0 umol/min/mg enzyme with ITP as substrate and manganese ions as cofactor (at 25 degrees Celsius and pH 6.75)</Vmax>
        <Vmax evidence="2">439.0 umol/min/mg enzyme with ITP as substrate and zinc ions as cofactor (at 25 degrees Celsius and pH 6.75)</Vmax>
        <text evidence="2">kcat is 573.3 sec(-1) with ITP as substrate. kcat is 2625 sec(-1) with XTP as substrate. kcat is 119 sec(-1) with GDP as substrate. kcat is 616.5 sec(-1) with dITP as substrate. kcat is 22.3 sec(-1) with GTP as substrate.</text>
    </kinetics>
    <phDependence>
        <text evidence="2">Optimum pH is 6.75.</text>
    </phDependence>
</comment>
<comment type="subunit">
    <text evidence="1 2">Homodimer.</text>
</comment>
<comment type="similarity">
    <text evidence="1 4">Belongs to the YjjX NTPase family.</text>
</comment>
<comment type="caution">
    <text evidence="4">PubMed:7841459 sequence was originally thought to originate from S.typhimurium, but seems to come from an unknown E.coli strain.</text>
</comment>
<comment type="sequence caution" evidence="4">
    <conflict type="erroneous initiation">
        <sequence resource="EMBL-CDS" id="AAA97290"/>
    </conflict>
    <text>Extended N-terminus.</text>
</comment>
<keyword id="KW-0002">3D-structure</keyword>
<keyword id="KW-0046">Antibiotic resistance</keyword>
<keyword id="KW-0378">Hydrolase</keyword>
<keyword id="KW-0460">Magnesium</keyword>
<keyword id="KW-0464">Manganese</keyword>
<keyword id="KW-0479">Metal-binding</keyword>
<keyword id="KW-0546">Nucleotide metabolism</keyword>
<keyword id="KW-0547">Nucleotide-binding</keyword>
<keyword id="KW-1185">Reference proteome</keyword>
<gene>
    <name type="primary">yjjX</name>
    <name type="ordered locus">b4394</name>
    <name type="ordered locus">JW5801</name>
</gene>